<comment type="function">
    <text evidence="1">DNA ligase that catalyzes the formation of phosphodiester linkages between 5'-phosphoryl and 3'-hydroxyl groups in double-stranded DNA using NAD as a coenzyme and as the energy source for the reaction. It is essential for DNA replication and repair of damaged DNA.</text>
</comment>
<comment type="catalytic activity">
    <reaction evidence="1">
        <text>NAD(+) + (deoxyribonucleotide)n-3'-hydroxyl + 5'-phospho-(deoxyribonucleotide)m = (deoxyribonucleotide)n+m + AMP + beta-nicotinamide D-nucleotide.</text>
        <dbReference type="EC" id="6.5.1.2"/>
    </reaction>
</comment>
<comment type="cofactor">
    <cofactor evidence="1">
        <name>Mg(2+)</name>
        <dbReference type="ChEBI" id="CHEBI:18420"/>
    </cofactor>
    <cofactor evidence="1">
        <name>Mn(2+)</name>
        <dbReference type="ChEBI" id="CHEBI:29035"/>
    </cofactor>
</comment>
<comment type="similarity">
    <text evidence="1">Belongs to the NAD-dependent DNA ligase family. LigA subfamily.</text>
</comment>
<feature type="chain" id="PRO_0000313459" description="DNA ligase">
    <location>
        <begin position="1"/>
        <end position="652"/>
    </location>
</feature>
<feature type="domain" description="BRCT" evidence="1">
    <location>
        <begin position="577"/>
        <end position="652"/>
    </location>
</feature>
<feature type="active site" description="N6-AMP-lysine intermediate" evidence="1">
    <location>
        <position position="109"/>
    </location>
</feature>
<feature type="binding site" evidence="1">
    <location>
        <begin position="29"/>
        <end position="33"/>
    </location>
    <ligand>
        <name>NAD(+)</name>
        <dbReference type="ChEBI" id="CHEBI:57540"/>
    </ligand>
</feature>
<feature type="binding site" evidence="1">
    <location>
        <begin position="78"/>
        <end position="79"/>
    </location>
    <ligand>
        <name>NAD(+)</name>
        <dbReference type="ChEBI" id="CHEBI:57540"/>
    </ligand>
</feature>
<feature type="binding site" evidence="1">
    <location>
        <position position="107"/>
    </location>
    <ligand>
        <name>NAD(+)</name>
        <dbReference type="ChEBI" id="CHEBI:57540"/>
    </ligand>
</feature>
<feature type="binding site" evidence="1">
    <location>
        <position position="130"/>
    </location>
    <ligand>
        <name>NAD(+)</name>
        <dbReference type="ChEBI" id="CHEBI:57540"/>
    </ligand>
</feature>
<feature type="binding site" evidence="1">
    <location>
        <position position="164"/>
    </location>
    <ligand>
        <name>NAD(+)</name>
        <dbReference type="ChEBI" id="CHEBI:57540"/>
    </ligand>
</feature>
<feature type="binding site" evidence="1">
    <location>
        <position position="278"/>
    </location>
    <ligand>
        <name>NAD(+)</name>
        <dbReference type="ChEBI" id="CHEBI:57540"/>
    </ligand>
</feature>
<feature type="binding site" evidence="1">
    <location>
        <position position="302"/>
    </location>
    <ligand>
        <name>NAD(+)</name>
        <dbReference type="ChEBI" id="CHEBI:57540"/>
    </ligand>
</feature>
<feature type="binding site" evidence="1">
    <location>
        <position position="395"/>
    </location>
    <ligand>
        <name>Zn(2+)</name>
        <dbReference type="ChEBI" id="CHEBI:29105"/>
    </ligand>
</feature>
<feature type="binding site" evidence="1">
    <location>
        <position position="398"/>
    </location>
    <ligand>
        <name>Zn(2+)</name>
        <dbReference type="ChEBI" id="CHEBI:29105"/>
    </ligand>
</feature>
<feature type="binding site" evidence="1">
    <location>
        <position position="413"/>
    </location>
    <ligand>
        <name>Zn(2+)</name>
        <dbReference type="ChEBI" id="CHEBI:29105"/>
    </ligand>
</feature>
<feature type="binding site" evidence="1">
    <location>
        <position position="418"/>
    </location>
    <ligand>
        <name>Zn(2+)</name>
        <dbReference type="ChEBI" id="CHEBI:29105"/>
    </ligand>
</feature>
<evidence type="ECO:0000255" key="1">
    <source>
        <dbReference type="HAMAP-Rule" id="MF_01588"/>
    </source>
</evidence>
<dbReference type="EC" id="6.5.1.2" evidence="1"/>
<dbReference type="EMBL" id="CP000259">
    <property type="protein sequence ID" value="ABF31815.1"/>
    <property type="molecule type" value="Genomic_DNA"/>
</dbReference>
<dbReference type="RefSeq" id="WP_002990422.1">
    <property type="nucleotide sequence ID" value="NC_008021.1"/>
</dbReference>
<dbReference type="SMR" id="Q1JMJ7"/>
<dbReference type="KEGG" id="spk:MGAS9429_Spy0627"/>
<dbReference type="HOGENOM" id="CLU_007764_2_1_9"/>
<dbReference type="Proteomes" id="UP000002433">
    <property type="component" value="Chromosome"/>
</dbReference>
<dbReference type="GO" id="GO:0005829">
    <property type="term" value="C:cytosol"/>
    <property type="evidence" value="ECO:0007669"/>
    <property type="project" value="TreeGrafter"/>
</dbReference>
<dbReference type="GO" id="GO:0003677">
    <property type="term" value="F:DNA binding"/>
    <property type="evidence" value="ECO:0007669"/>
    <property type="project" value="InterPro"/>
</dbReference>
<dbReference type="GO" id="GO:0003911">
    <property type="term" value="F:DNA ligase (NAD+) activity"/>
    <property type="evidence" value="ECO:0007669"/>
    <property type="project" value="UniProtKB-UniRule"/>
</dbReference>
<dbReference type="GO" id="GO:0046872">
    <property type="term" value="F:metal ion binding"/>
    <property type="evidence" value="ECO:0007669"/>
    <property type="project" value="UniProtKB-KW"/>
</dbReference>
<dbReference type="GO" id="GO:0006281">
    <property type="term" value="P:DNA repair"/>
    <property type="evidence" value="ECO:0007669"/>
    <property type="project" value="UniProtKB-KW"/>
</dbReference>
<dbReference type="GO" id="GO:0006260">
    <property type="term" value="P:DNA replication"/>
    <property type="evidence" value="ECO:0007669"/>
    <property type="project" value="UniProtKB-KW"/>
</dbReference>
<dbReference type="CDD" id="cd17748">
    <property type="entry name" value="BRCT_DNA_ligase_like"/>
    <property type="match status" value="1"/>
</dbReference>
<dbReference type="CDD" id="cd00114">
    <property type="entry name" value="LIGANc"/>
    <property type="match status" value="1"/>
</dbReference>
<dbReference type="FunFam" id="1.10.150.20:FF:000007">
    <property type="entry name" value="DNA ligase"/>
    <property type="match status" value="1"/>
</dbReference>
<dbReference type="FunFam" id="1.10.287.610:FF:000002">
    <property type="entry name" value="DNA ligase"/>
    <property type="match status" value="1"/>
</dbReference>
<dbReference type="FunFam" id="2.40.50.140:FF:000012">
    <property type="entry name" value="DNA ligase"/>
    <property type="match status" value="1"/>
</dbReference>
<dbReference type="FunFam" id="3.30.470.30:FF:000001">
    <property type="entry name" value="DNA ligase"/>
    <property type="match status" value="1"/>
</dbReference>
<dbReference type="Gene3D" id="6.20.10.30">
    <property type="match status" value="1"/>
</dbReference>
<dbReference type="Gene3D" id="1.10.150.20">
    <property type="entry name" value="5' to 3' exonuclease, C-terminal subdomain"/>
    <property type="match status" value="2"/>
</dbReference>
<dbReference type="Gene3D" id="3.40.50.10190">
    <property type="entry name" value="BRCT domain"/>
    <property type="match status" value="1"/>
</dbReference>
<dbReference type="Gene3D" id="3.30.470.30">
    <property type="entry name" value="DNA ligase/mRNA capping enzyme"/>
    <property type="match status" value="1"/>
</dbReference>
<dbReference type="Gene3D" id="1.10.287.610">
    <property type="entry name" value="Helix hairpin bin"/>
    <property type="match status" value="1"/>
</dbReference>
<dbReference type="Gene3D" id="2.40.50.140">
    <property type="entry name" value="Nucleic acid-binding proteins"/>
    <property type="match status" value="1"/>
</dbReference>
<dbReference type="HAMAP" id="MF_01588">
    <property type="entry name" value="DNA_ligase_A"/>
    <property type="match status" value="1"/>
</dbReference>
<dbReference type="InterPro" id="IPR001357">
    <property type="entry name" value="BRCT_dom"/>
</dbReference>
<dbReference type="InterPro" id="IPR036420">
    <property type="entry name" value="BRCT_dom_sf"/>
</dbReference>
<dbReference type="InterPro" id="IPR041663">
    <property type="entry name" value="DisA/LigA_HHH"/>
</dbReference>
<dbReference type="InterPro" id="IPR001679">
    <property type="entry name" value="DNA_ligase"/>
</dbReference>
<dbReference type="InterPro" id="IPR018239">
    <property type="entry name" value="DNA_ligase_AS"/>
</dbReference>
<dbReference type="InterPro" id="IPR033136">
    <property type="entry name" value="DNA_ligase_CS"/>
</dbReference>
<dbReference type="InterPro" id="IPR013839">
    <property type="entry name" value="DNAligase_adenylation"/>
</dbReference>
<dbReference type="InterPro" id="IPR013840">
    <property type="entry name" value="DNAligase_N"/>
</dbReference>
<dbReference type="InterPro" id="IPR003583">
    <property type="entry name" value="Hlx-hairpin-Hlx_DNA-bd_motif"/>
</dbReference>
<dbReference type="InterPro" id="IPR012340">
    <property type="entry name" value="NA-bd_OB-fold"/>
</dbReference>
<dbReference type="InterPro" id="IPR004150">
    <property type="entry name" value="NAD_DNA_ligase_OB"/>
</dbReference>
<dbReference type="InterPro" id="IPR010994">
    <property type="entry name" value="RuvA_2-like"/>
</dbReference>
<dbReference type="InterPro" id="IPR004149">
    <property type="entry name" value="Znf_DNAligase_C4"/>
</dbReference>
<dbReference type="NCBIfam" id="TIGR00575">
    <property type="entry name" value="dnlj"/>
    <property type="match status" value="1"/>
</dbReference>
<dbReference type="NCBIfam" id="NF005932">
    <property type="entry name" value="PRK07956.1"/>
    <property type="match status" value="1"/>
</dbReference>
<dbReference type="PANTHER" id="PTHR23389">
    <property type="entry name" value="CHROMOSOME TRANSMISSION FIDELITY FACTOR 18"/>
    <property type="match status" value="1"/>
</dbReference>
<dbReference type="PANTHER" id="PTHR23389:SF9">
    <property type="entry name" value="DNA LIGASE"/>
    <property type="match status" value="1"/>
</dbReference>
<dbReference type="Pfam" id="PF00533">
    <property type="entry name" value="BRCT"/>
    <property type="match status" value="1"/>
</dbReference>
<dbReference type="Pfam" id="PF01653">
    <property type="entry name" value="DNA_ligase_aden"/>
    <property type="match status" value="1"/>
</dbReference>
<dbReference type="Pfam" id="PF03120">
    <property type="entry name" value="DNA_ligase_OB"/>
    <property type="match status" value="1"/>
</dbReference>
<dbReference type="Pfam" id="PF03119">
    <property type="entry name" value="DNA_ligase_ZBD"/>
    <property type="match status" value="1"/>
</dbReference>
<dbReference type="Pfam" id="PF12826">
    <property type="entry name" value="HHH_2"/>
    <property type="match status" value="1"/>
</dbReference>
<dbReference type="Pfam" id="PF14520">
    <property type="entry name" value="HHH_5"/>
    <property type="match status" value="1"/>
</dbReference>
<dbReference type="PIRSF" id="PIRSF001604">
    <property type="entry name" value="LigA"/>
    <property type="match status" value="1"/>
</dbReference>
<dbReference type="SMART" id="SM00292">
    <property type="entry name" value="BRCT"/>
    <property type="match status" value="1"/>
</dbReference>
<dbReference type="SMART" id="SM00278">
    <property type="entry name" value="HhH1"/>
    <property type="match status" value="3"/>
</dbReference>
<dbReference type="SMART" id="SM00532">
    <property type="entry name" value="LIGANc"/>
    <property type="match status" value="1"/>
</dbReference>
<dbReference type="SUPFAM" id="SSF52113">
    <property type="entry name" value="BRCT domain"/>
    <property type="match status" value="1"/>
</dbReference>
<dbReference type="SUPFAM" id="SSF56091">
    <property type="entry name" value="DNA ligase/mRNA capping enzyme, catalytic domain"/>
    <property type="match status" value="1"/>
</dbReference>
<dbReference type="SUPFAM" id="SSF50249">
    <property type="entry name" value="Nucleic acid-binding proteins"/>
    <property type="match status" value="1"/>
</dbReference>
<dbReference type="SUPFAM" id="SSF47781">
    <property type="entry name" value="RuvA domain 2-like"/>
    <property type="match status" value="1"/>
</dbReference>
<dbReference type="PROSITE" id="PS50172">
    <property type="entry name" value="BRCT"/>
    <property type="match status" value="1"/>
</dbReference>
<dbReference type="PROSITE" id="PS01055">
    <property type="entry name" value="DNA_LIGASE_N1"/>
    <property type="match status" value="1"/>
</dbReference>
<dbReference type="PROSITE" id="PS01056">
    <property type="entry name" value="DNA_LIGASE_N2"/>
    <property type="match status" value="1"/>
</dbReference>
<reference key="1">
    <citation type="journal article" date="2006" name="Proc. Natl. Acad. Sci. U.S.A.">
        <title>Molecular genetic anatomy of inter- and intraserotype variation in the human bacterial pathogen group A Streptococcus.</title>
        <authorList>
            <person name="Beres S.B."/>
            <person name="Richter E.W."/>
            <person name="Nagiec M.J."/>
            <person name="Sumby P."/>
            <person name="Porcella S.F."/>
            <person name="DeLeo F.R."/>
            <person name="Musser J.M."/>
        </authorList>
    </citation>
    <scope>NUCLEOTIDE SEQUENCE [LARGE SCALE GENOMIC DNA]</scope>
    <source>
        <strain>MGAS9429</strain>
    </source>
</reference>
<accession>Q1JMJ7</accession>
<sequence>MKKRIKELTDLLNRYRYDYYTKDAPSVSDSDYDKLYRELVTLEQSYPEYVLQDSPTQQVGGTILKGFEKYRHQYPLFSLQDAFSREELDAFDKRVKAEFPNATYLAELKIDGLSISLSYENGFLQVGATRGDGNIGENITENIKKIKDIPHQLSEPLTITVRGEAYMSRQSFKAINEARQENGETEFANPRNAAAGTLRQLDTSVVAKRQLATFLYQEASPTARNQQNEVLAELAGLGFSVNPYYQLTSSMDEIWDFIKTIEAKRDQLAYDIDGVVIKVNSLAMQEELGFTVKAPRWAIAYKFPAEEKEAEILSVDWTVGRTGVVTPTANLTPVQLAGTTVSRATLHNVDYIAEKDIRIGDTVIVYKAGDIIPAVLNVVMSKRNQQEVMLIPKLCPSCGSELVHFEDEVALRCINPLCPSLIQRSLEHFASRDAMNITGLGPAIVEKLFLAGFVHDVADIYQLTKENFMQLDGIKEKSADKLLAAIEASKSNSAEKLLFGLGIRHIGSKVSRLILEVYGDISALLTAKEEEIARIDGLGSTIAQSLTQYFEQKTAAILVDELKTAGVNMHYSGQKVNSDAALFGLTVVLTGKLNQLNRNEAKDKLEALGAKVTGSVSKKTDLVIAGSDAGSKLEKAKSLGIRIEDEDWLRQL</sequence>
<proteinExistence type="inferred from homology"/>
<organism>
    <name type="scientific">Streptococcus pyogenes serotype M12 (strain MGAS9429)</name>
    <dbReference type="NCBI Taxonomy" id="370551"/>
    <lineage>
        <taxon>Bacteria</taxon>
        <taxon>Bacillati</taxon>
        <taxon>Bacillota</taxon>
        <taxon>Bacilli</taxon>
        <taxon>Lactobacillales</taxon>
        <taxon>Streptococcaceae</taxon>
        <taxon>Streptococcus</taxon>
    </lineage>
</organism>
<gene>
    <name evidence="1" type="primary">ligA</name>
    <name type="ordered locus">MGAS9429_Spy0627</name>
</gene>
<keyword id="KW-0227">DNA damage</keyword>
<keyword id="KW-0234">DNA repair</keyword>
<keyword id="KW-0235">DNA replication</keyword>
<keyword id="KW-0436">Ligase</keyword>
<keyword id="KW-0460">Magnesium</keyword>
<keyword id="KW-0464">Manganese</keyword>
<keyword id="KW-0479">Metal-binding</keyword>
<keyword id="KW-0520">NAD</keyword>
<keyword id="KW-0862">Zinc</keyword>
<name>DNLJ_STRPC</name>
<protein>
    <recommendedName>
        <fullName evidence="1">DNA ligase</fullName>
        <ecNumber evidence="1">6.5.1.2</ecNumber>
    </recommendedName>
    <alternativeName>
        <fullName evidence="1">Polydeoxyribonucleotide synthase [NAD(+)]</fullName>
    </alternativeName>
</protein>